<gene>
    <name evidence="1" type="primary">fmt</name>
    <name type="ordered locus">RF_0325</name>
</gene>
<sequence length="303" mass="34001">MKVIFMGTPEFAVPALKKLITHHEVKAVFAQQPKAKGRGLNLAKSPIHQLAFEHQIPVYTPSTLRNDKTINLINKINADIIVVIAYGFIVPKAILEAKKYGCLNIHPSDLPRHRGAAPLQRTIIEGDRKSSVCIMRMDAGLDTGDILMKEDFDLEERTTLEELHNKCANLGAELLIKTLANIDNIVPIKQSSDGVTYAHKLTKEEGKINWYESAYKIDCKIRGMNPWPGAYFSYNDKIIKILEAEYLNAEHHFTSGTVISDKLEIACGSGILRVKKLQQESKKALNIEEFLRGTNILKDTILK</sequence>
<evidence type="ECO:0000255" key="1">
    <source>
        <dbReference type="HAMAP-Rule" id="MF_00182"/>
    </source>
</evidence>
<evidence type="ECO:0000305" key="2"/>
<protein>
    <recommendedName>
        <fullName evidence="1">Methionyl-tRNA formyltransferase</fullName>
        <ecNumber evidence="1">2.1.2.9</ecNumber>
    </recommendedName>
</protein>
<reference key="1">
    <citation type="journal article" date="2005" name="PLoS Biol.">
        <title>The genome sequence of Rickettsia felis identifies the first putative conjugative plasmid in an obligate intracellular parasite.</title>
        <authorList>
            <person name="Ogata H."/>
            <person name="Renesto P."/>
            <person name="Audic S."/>
            <person name="Robert C."/>
            <person name="Blanc G."/>
            <person name="Fournier P.-E."/>
            <person name="Parinello H."/>
            <person name="Claverie J.-M."/>
            <person name="Raoult D."/>
        </authorList>
    </citation>
    <scope>NUCLEOTIDE SEQUENCE [LARGE SCALE GENOMIC DNA]</scope>
    <source>
        <strain>ATCC VR-1525 / URRWXCal2</strain>
    </source>
</reference>
<reference key="2">
    <citation type="submission" date="1997-05" db="EMBL/GenBank/DDBJ databases">
        <title>Rearrangement of the rRNA genes in Rickettsia preceeded the divergence of the typhus and the spotted fever group Rickettsia.</title>
        <authorList>
            <person name="Andersson S.G.E."/>
            <person name="Stothard D.R."/>
            <person name="Romedenne M."/>
            <person name="Viseur N."/>
            <person name="Fuerst P."/>
            <person name="Kurland C.G."/>
        </authorList>
    </citation>
    <scope>NUCLEOTIDE SEQUENCE [GENOMIC DNA] OF 231-303</scope>
</reference>
<accession>O33523</accession>
<accession>Q4UMN2</accession>
<organism>
    <name type="scientific">Rickettsia felis (strain ATCC VR-1525 / URRWXCal2)</name>
    <name type="common">Rickettsia azadi</name>
    <dbReference type="NCBI Taxonomy" id="315456"/>
    <lineage>
        <taxon>Bacteria</taxon>
        <taxon>Pseudomonadati</taxon>
        <taxon>Pseudomonadota</taxon>
        <taxon>Alphaproteobacteria</taxon>
        <taxon>Rickettsiales</taxon>
        <taxon>Rickettsiaceae</taxon>
        <taxon>Rickettsieae</taxon>
        <taxon>Rickettsia</taxon>
        <taxon>spotted fever group</taxon>
    </lineage>
</organism>
<keyword id="KW-0648">Protein biosynthesis</keyword>
<keyword id="KW-0808">Transferase</keyword>
<name>FMT_RICFE</name>
<feature type="chain" id="PRO_0000083030" description="Methionyl-tRNA formyltransferase">
    <location>
        <begin position="1"/>
        <end position="303"/>
    </location>
</feature>
<feature type="binding site" evidence="1">
    <location>
        <begin position="108"/>
        <end position="111"/>
    </location>
    <ligand>
        <name>(6S)-5,6,7,8-tetrahydrofolate</name>
        <dbReference type="ChEBI" id="CHEBI:57453"/>
    </ligand>
</feature>
<feature type="sequence conflict" description="In Ref. 2; CAA73598." evidence="2" ref="2">
    <original>E</original>
    <variation>D</variation>
    <location>
        <position position="250"/>
    </location>
</feature>
<feature type="sequence conflict" description="In Ref. 2; CAA73598." evidence="2" ref="2">
    <location>
        <position position="298"/>
    </location>
</feature>
<comment type="function">
    <text evidence="1">Attaches a formyl group to the free amino group of methionyl-tRNA(fMet). The formyl group appears to play a dual role in the initiator identity of N-formylmethionyl-tRNA by promoting its recognition by IF2 and preventing the misappropriation of this tRNA by the elongation apparatus.</text>
</comment>
<comment type="catalytic activity">
    <reaction evidence="1">
        <text>L-methionyl-tRNA(fMet) + (6R)-10-formyltetrahydrofolate = N-formyl-L-methionyl-tRNA(fMet) + (6S)-5,6,7,8-tetrahydrofolate + H(+)</text>
        <dbReference type="Rhea" id="RHEA:24380"/>
        <dbReference type="Rhea" id="RHEA-COMP:9952"/>
        <dbReference type="Rhea" id="RHEA-COMP:9953"/>
        <dbReference type="ChEBI" id="CHEBI:15378"/>
        <dbReference type="ChEBI" id="CHEBI:57453"/>
        <dbReference type="ChEBI" id="CHEBI:78530"/>
        <dbReference type="ChEBI" id="CHEBI:78844"/>
        <dbReference type="ChEBI" id="CHEBI:195366"/>
        <dbReference type="EC" id="2.1.2.9"/>
    </reaction>
</comment>
<comment type="similarity">
    <text evidence="1 2">Belongs to the Fmt family.</text>
</comment>
<dbReference type="EC" id="2.1.2.9" evidence="1"/>
<dbReference type="EMBL" id="CP000053">
    <property type="protein sequence ID" value="AAY61176.1"/>
    <property type="molecule type" value="Genomic_DNA"/>
</dbReference>
<dbReference type="EMBL" id="Y13131">
    <property type="protein sequence ID" value="CAA73598.1"/>
    <property type="molecule type" value="Genomic_DNA"/>
</dbReference>
<dbReference type="SMR" id="O33523"/>
<dbReference type="STRING" id="315456.RF_0325"/>
<dbReference type="KEGG" id="rfe:RF_0325"/>
<dbReference type="eggNOG" id="COG0223">
    <property type="taxonomic scope" value="Bacteria"/>
</dbReference>
<dbReference type="HOGENOM" id="CLU_033347_1_1_5"/>
<dbReference type="OrthoDB" id="9802815at2"/>
<dbReference type="Proteomes" id="UP000008548">
    <property type="component" value="Chromosome"/>
</dbReference>
<dbReference type="GO" id="GO:0005829">
    <property type="term" value="C:cytosol"/>
    <property type="evidence" value="ECO:0007669"/>
    <property type="project" value="TreeGrafter"/>
</dbReference>
<dbReference type="GO" id="GO:0004479">
    <property type="term" value="F:methionyl-tRNA formyltransferase activity"/>
    <property type="evidence" value="ECO:0007669"/>
    <property type="project" value="UniProtKB-UniRule"/>
</dbReference>
<dbReference type="CDD" id="cd08646">
    <property type="entry name" value="FMT_core_Met-tRNA-FMT_N"/>
    <property type="match status" value="1"/>
</dbReference>
<dbReference type="CDD" id="cd08704">
    <property type="entry name" value="Met_tRNA_FMT_C"/>
    <property type="match status" value="1"/>
</dbReference>
<dbReference type="Gene3D" id="3.40.50.12230">
    <property type="match status" value="1"/>
</dbReference>
<dbReference type="HAMAP" id="MF_00182">
    <property type="entry name" value="Formyl_trans"/>
    <property type="match status" value="1"/>
</dbReference>
<dbReference type="InterPro" id="IPR005794">
    <property type="entry name" value="Fmt"/>
</dbReference>
<dbReference type="InterPro" id="IPR005793">
    <property type="entry name" value="Formyl_trans_C"/>
</dbReference>
<dbReference type="InterPro" id="IPR002376">
    <property type="entry name" value="Formyl_transf_N"/>
</dbReference>
<dbReference type="InterPro" id="IPR036477">
    <property type="entry name" value="Formyl_transf_N_sf"/>
</dbReference>
<dbReference type="InterPro" id="IPR011034">
    <property type="entry name" value="Formyl_transferase-like_C_sf"/>
</dbReference>
<dbReference type="InterPro" id="IPR044135">
    <property type="entry name" value="Met-tRNA-FMT_C"/>
</dbReference>
<dbReference type="InterPro" id="IPR041711">
    <property type="entry name" value="Met-tRNA-FMT_N"/>
</dbReference>
<dbReference type="NCBIfam" id="TIGR00460">
    <property type="entry name" value="fmt"/>
    <property type="match status" value="1"/>
</dbReference>
<dbReference type="PANTHER" id="PTHR11138">
    <property type="entry name" value="METHIONYL-TRNA FORMYLTRANSFERASE"/>
    <property type="match status" value="1"/>
</dbReference>
<dbReference type="PANTHER" id="PTHR11138:SF5">
    <property type="entry name" value="METHIONYL-TRNA FORMYLTRANSFERASE, MITOCHONDRIAL"/>
    <property type="match status" value="1"/>
</dbReference>
<dbReference type="Pfam" id="PF02911">
    <property type="entry name" value="Formyl_trans_C"/>
    <property type="match status" value="1"/>
</dbReference>
<dbReference type="Pfam" id="PF00551">
    <property type="entry name" value="Formyl_trans_N"/>
    <property type="match status" value="1"/>
</dbReference>
<dbReference type="SUPFAM" id="SSF50486">
    <property type="entry name" value="FMT C-terminal domain-like"/>
    <property type="match status" value="1"/>
</dbReference>
<dbReference type="SUPFAM" id="SSF53328">
    <property type="entry name" value="Formyltransferase"/>
    <property type="match status" value="1"/>
</dbReference>
<proteinExistence type="inferred from homology"/>